<name>HPDL_RAT</name>
<comment type="function">
    <text evidence="2">Iron-dependent dioxygenase that catalyzes the conversion of 4-hydroxyphenylpyruvate (4-HPPA) to 4-hydroxymandelate (4-HMA) in the mitochondria, one of the steps in the biosynthesis of coenzyme Q10 from tyrosine.</text>
</comment>
<comment type="catalytic activity">
    <reaction evidence="2">
        <text>3-(4-hydroxyphenyl)pyruvate + O2 = (S)-4-hydroxymandelate + CO2</text>
        <dbReference type="Rhea" id="RHEA:21376"/>
        <dbReference type="ChEBI" id="CHEBI:15379"/>
        <dbReference type="ChEBI" id="CHEBI:16526"/>
        <dbReference type="ChEBI" id="CHEBI:17210"/>
        <dbReference type="ChEBI" id="CHEBI:36242"/>
        <dbReference type="EC" id="1.13.11.46"/>
    </reaction>
    <physiologicalReaction direction="left-to-right" evidence="2">
        <dbReference type="Rhea" id="RHEA:21377"/>
    </physiologicalReaction>
</comment>
<comment type="cofactor">
    <cofactor evidence="1">
        <name>Fe cation</name>
        <dbReference type="ChEBI" id="CHEBI:24875"/>
    </cofactor>
    <text evidence="1">Binds 1 Fe cation per subunit.</text>
</comment>
<comment type="subcellular location">
    <subcellularLocation>
        <location evidence="2">Mitochondrion</location>
    </subcellularLocation>
</comment>
<comment type="similarity">
    <text evidence="4">Belongs to the 4HPPD family.</text>
</comment>
<feature type="chain" id="PRO_0000271121" description="4-hydroxyphenylpyruvate dioxygenase-like protein">
    <location>
        <begin position="1"/>
        <end position="371"/>
    </location>
</feature>
<feature type="domain" description="VOC 1" evidence="3">
    <location>
        <begin position="7"/>
        <end position="135"/>
    </location>
</feature>
<feature type="domain" description="VOC 2" evidence="3">
    <location>
        <begin position="160"/>
        <end position="328"/>
    </location>
</feature>
<feature type="binding site" evidence="1">
    <location>
        <position position="163"/>
    </location>
    <ligand>
        <name>Fe cation</name>
        <dbReference type="ChEBI" id="CHEBI:24875"/>
    </ligand>
</feature>
<feature type="binding site" evidence="1">
    <location>
        <position position="258"/>
    </location>
    <ligand>
        <name>Fe cation</name>
        <dbReference type="ChEBI" id="CHEBI:24875"/>
    </ligand>
</feature>
<feature type="binding site" evidence="1">
    <location>
        <position position="339"/>
    </location>
    <ligand>
        <name>Fe cation</name>
        <dbReference type="ChEBI" id="CHEBI:24875"/>
    </ligand>
</feature>
<gene>
    <name evidence="5" type="primary">Hpdl</name>
    <name type="synonym">Gloxd1</name>
</gene>
<sequence>MAAPARRLCHIAFHVPAGQPLARDLQRIFGFQPLAVREAGGWRQLALRSGDAVFLVNEGTGPREPLYGLDPHHSVPSATNLCFDVEDVDRAARALAARGCIMPVPPTRVRDAQGTATYTVVSSPAGNLSLTLLQRAGYRGSFLPGFRPLPCTPGPGWVSHVDHLTLACTSGSSPTLMRWFHNCLGFHHLPLSPGEDPELGLKVAVGSGRGGLRLTALQTLPNSTVPTLVLAESLPGLTSEQDQVEQFLTRHGGPGLQHVGLYTPNIIDASEGMAKAGGRLLTPPEAYYQQPGKEEQILASGHKPSFLERQGILLDGDKDEFLLQVFTKSLFDEDTFFLELIERQGATGFGQNNIRALWQSVQEEAARAQGT</sequence>
<dbReference type="EC" id="1.13.11.46" evidence="2"/>
<dbReference type="EMBL" id="BC083702">
    <property type="protein sequence ID" value="AAH83702.1"/>
    <property type="molecule type" value="mRNA"/>
</dbReference>
<dbReference type="RefSeq" id="NP_001014090.1">
    <property type="nucleotide sequence ID" value="NM_001014068.1"/>
</dbReference>
<dbReference type="SMR" id="Q5XIH9"/>
<dbReference type="FunCoup" id="Q5XIH9">
    <property type="interactions" value="117"/>
</dbReference>
<dbReference type="STRING" id="10116.ENSRNOP00000024393"/>
<dbReference type="PhosphoSitePlus" id="Q5XIH9"/>
<dbReference type="PaxDb" id="10116-ENSRNOP00000024393"/>
<dbReference type="Ensembl" id="ENSRNOT00000024393.4">
    <property type="protein sequence ID" value="ENSRNOP00000024393.2"/>
    <property type="gene ID" value="ENSRNOG00000018143.4"/>
</dbReference>
<dbReference type="GeneID" id="313521"/>
<dbReference type="KEGG" id="rno:313521"/>
<dbReference type="UCSC" id="RGD:1310014">
    <property type="organism name" value="rat"/>
</dbReference>
<dbReference type="AGR" id="RGD:1310014"/>
<dbReference type="CTD" id="84842"/>
<dbReference type="RGD" id="1310014">
    <property type="gene designation" value="Hpdl"/>
</dbReference>
<dbReference type="eggNOG" id="KOG0638">
    <property type="taxonomic scope" value="Eukaryota"/>
</dbReference>
<dbReference type="GeneTree" id="ENSGT00530000063474"/>
<dbReference type="HOGENOM" id="CLU_034004_2_0_1"/>
<dbReference type="InParanoid" id="Q5XIH9"/>
<dbReference type="OMA" id="PTLMRWF"/>
<dbReference type="OrthoDB" id="414569at2759"/>
<dbReference type="PhylomeDB" id="Q5XIH9"/>
<dbReference type="TreeFam" id="TF300622"/>
<dbReference type="Reactome" id="R-RNO-2142789">
    <property type="pathway name" value="Ubiquinol biosynthesis"/>
</dbReference>
<dbReference type="PRO" id="PR:Q5XIH9"/>
<dbReference type="Proteomes" id="UP000002494">
    <property type="component" value="Chromosome 5"/>
</dbReference>
<dbReference type="Bgee" id="ENSRNOG00000018143">
    <property type="expression patterns" value="Expressed in heart and 16 other cell types or tissues"/>
</dbReference>
<dbReference type="GO" id="GO:0005739">
    <property type="term" value="C:mitochondrion"/>
    <property type="evidence" value="ECO:0000250"/>
    <property type="project" value="UniProtKB"/>
</dbReference>
<dbReference type="GO" id="GO:0050585">
    <property type="term" value="F:4-hydroxymandelate synthase activity"/>
    <property type="evidence" value="ECO:0000250"/>
    <property type="project" value="UniProtKB"/>
</dbReference>
<dbReference type="GO" id="GO:0003868">
    <property type="term" value="F:4-hydroxyphenylpyruvate dioxygenase activity"/>
    <property type="evidence" value="ECO:0007669"/>
    <property type="project" value="InterPro"/>
</dbReference>
<dbReference type="GO" id="GO:0046872">
    <property type="term" value="F:metal ion binding"/>
    <property type="evidence" value="ECO:0007669"/>
    <property type="project" value="UniProtKB-KW"/>
</dbReference>
<dbReference type="GO" id="GO:0009072">
    <property type="term" value="P:aromatic amino acid metabolic process"/>
    <property type="evidence" value="ECO:0007669"/>
    <property type="project" value="InterPro"/>
</dbReference>
<dbReference type="CDD" id="cd07250">
    <property type="entry name" value="HPPD_C_like"/>
    <property type="match status" value="1"/>
</dbReference>
<dbReference type="CDD" id="cd08342">
    <property type="entry name" value="HPPD_N_like"/>
    <property type="match status" value="1"/>
</dbReference>
<dbReference type="Gene3D" id="3.10.180.10">
    <property type="entry name" value="2,3-Dihydroxybiphenyl 1,2-Dioxygenase, domain 1"/>
    <property type="match status" value="2"/>
</dbReference>
<dbReference type="InterPro" id="IPR005956">
    <property type="entry name" value="4OHPhenylPyrv_dOase"/>
</dbReference>
<dbReference type="InterPro" id="IPR041735">
    <property type="entry name" value="4OHPhenylPyrv_dOase_C"/>
</dbReference>
<dbReference type="InterPro" id="IPR041736">
    <property type="entry name" value="4OHPhenylPyrv_dOase_N"/>
</dbReference>
<dbReference type="InterPro" id="IPR029068">
    <property type="entry name" value="Glyas_Bleomycin-R_OHBP_Dase"/>
</dbReference>
<dbReference type="InterPro" id="IPR037523">
    <property type="entry name" value="VOC"/>
</dbReference>
<dbReference type="PANTHER" id="PTHR11959">
    <property type="entry name" value="4-HYDROXYPHENYLPYRUVATE DIOXYGENASE"/>
    <property type="match status" value="1"/>
</dbReference>
<dbReference type="PANTHER" id="PTHR11959:SF10">
    <property type="entry name" value="4-HYDROXYPHENYLPYRUVATE DIOXYGENASE-LIKE PROTEIN"/>
    <property type="match status" value="1"/>
</dbReference>
<dbReference type="PIRSF" id="PIRSF009283">
    <property type="entry name" value="HPP_dOase"/>
    <property type="match status" value="1"/>
</dbReference>
<dbReference type="SUPFAM" id="SSF54593">
    <property type="entry name" value="Glyoxalase/Bleomycin resistance protein/Dihydroxybiphenyl dioxygenase"/>
    <property type="match status" value="1"/>
</dbReference>
<dbReference type="PROSITE" id="PS51819">
    <property type="entry name" value="VOC"/>
    <property type="match status" value="2"/>
</dbReference>
<proteinExistence type="evidence at transcript level"/>
<organism>
    <name type="scientific">Rattus norvegicus</name>
    <name type="common">Rat</name>
    <dbReference type="NCBI Taxonomy" id="10116"/>
    <lineage>
        <taxon>Eukaryota</taxon>
        <taxon>Metazoa</taxon>
        <taxon>Chordata</taxon>
        <taxon>Craniata</taxon>
        <taxon>Vertebrata</taxon>
        <taxon>Euteleostomi</taxon>
        <taxon>Mammalia</taxon>
        <taxon>Eutheria</taxon>
        <taxon>Euarchontoglires</taxon>
        <taxon>Glires</taxon>
        <taxon>Rodentia</taxon>
        <taxon>Myomorpha</taxon>
        <taxon>Muroidea</taxon>
        <taxon>Muridae</taxon>
        <taxon>Murinae</taxon>
        <taxon>Rattus</taxon>
    </lineage>
</organism>
<evidence type="ECO:0000250" key="1">
    <source>
        <dbReference type="UniProtKB" id="O52791"/>
    </source>
</evidence>
<evidence type="ECO:0000250" key="2">
    <source>
        <dbReference type="UniProtKB" id="Q96IR7"/>
    </source>
</evidence>
<evidence type="ECO:0000255" key="3">
    <source>
        <dbReference type="PROSITE-ProRule" id="PRU01163"/>
    </source>
</evidence>
<evidence type="ECO:0000305" key="4"/>
<evidence type="ECO:0000312" key="5">
    <source>
        <dbReference type="RGD" id="1310014"/>
    </source>
</evidence>
<keyword id="KW-0223">Dioxygenase</keyword>
<keyword id="KW-0408">Iron</keyword>
<keyword id="KW-0479">Metal-binding</keyword>
<keyword id="KW-0496">Mitochondrion</keyword>
<keyword id="KW-0560">Oxidoreductase</keyword>
<keyword id="KW-1185">Reference proteome</keyword>
<keyword id="KW-0677">Repeat</keyword>
<protein>
    <recommendedName>
        <fullName>4-hydroxyphenylpyruvate dioxygenase-like protein</fullName>
        <shortName evidence="2">HPDL</shortName>
        <ecNumber evidence="2">1.13.11.46</ecNumber>
    </recommendedName>
    <alternativeName>
        <fullName>Glyoxalase domain-containing protein 1</fullName>
    </alternativeName>
</protein>
<reference key="1">
    <citation type="journal article" date="2004" name="Genome Res.">
        <title>The status, quality, and expansion of the NIH full-length cDNA project: the Mammalian Gene Collection (MGC).</title>
        <authorList>
            <consortium name="The MGC Project Team"/>
        </authorList>
    </citation>
    <scope>NUCLEOTIDE SEQUENCE [LARGE SCALE MRNA]</scope>
    <source>
        <tissue>Heart</tissue>
    </source>
</reference>
<accession>Q5XIH9</accession>